<proteinExistence type="evidence at transcript level"/>
<sequence length="587" mass="65388">MPRADPNLRNRARRPRARRGGGGGVGSNSSRHSGKCRRQRRALSAPPLTFLATTTTTTMMGVASTDDDSLLLKTPDELDKHSGSPQTILTLTDKHDIRQPRVHRGTYHLIQLHLDLRPEELRDPFQILLSTPLQLGEANGESQTAPATSQEEETAASHELEKKKEKEEKKEEEDEDDRNDDRERGILCVVSNEDSDVRPAFSLFPARPGCHILRSVIDQQLTRMAIVRLSLNLFALRIITPPLKRVPLRRKAAHHTALHDCMALHLPELTFESTLDINNVTENAASVADAAESTDADLTPTLTVRVRHAVCWHRVEGGISGPRGLTSRISARLSETTAKTLGPSVFGRLELDPNESPPDLTLSSLTLYQDGMLRFNVTCDRTEAPADPVAFRLRLRRETVRRPFFSDAPLPYFVPPRSGAADEGLEVRVPYELTLKNSHTLRIYRRFYGPYLGVFVPHNRQGLKMPVTVWLPRSWLELTVLVSDENGATFPRDALLGRLYFISSKHTLNRGCLSAMTHQVKSTLHSRSTSHSPSQQQLSVLGASIALEDLLPMRLASPETEPQDCKLTENTTEKTSPVTLAMVCGDL</sequence>
<accession>P29839</accession>
<protein>
    <recommendedName>
        <fullName>UL84 protein</fullName>
    </recommendedName>
</protein>
<organism>
    <name type="scientific">Human cytomegalovirus (strain Towne)</name>
    <name type="common">HHV-5</name>
    <name type="synonym">Human herpesvirus 5</name>
    <dbReference type="NCBI Taxonomy" id="10363"/>
    <lineage>
        <taxon>Viruses</taxon>
        <taxon>Duplodnaviria</taxon>
        <taxon>Heunggongvirae</taxon>
        <taxon>Peploviricota</taxon>
        <taxon>Herviviricetes</taxon>
        <taxon>Herpesvirales</taxon>
        <taxon>Orthoherpesviridae</taxon>
        <taxon>Betaherpesvirinae</taxon>
        <taxon>Cytomegalovirus</taxon>
        <taxon>Cytomegalovirus humanbeta5</taxon>
        <taxon>Human cytomegalovirus</taxon>
    </lineage>
</organism>
<feature type="chain" id="PRO_0000116298" description="UL84 protein">
    <location>
        <begin position="1"/>
        <end position="587"/>
    </location>
</feature>
<feature type="region of interest" description="Disordered" evidence="2">
    <location>
        <begin position="1"/>
        <end position="48"/>
    </location>
</feature>
<feature type="region of interest" description="Disordered" evidence="2">
    <location>
        <begin position="136"/>
        <end position="185"/>
    </location>
</feature>
<feature type="short sequence motif" description="Nuclear localization signal" evidence="1">
    <location>
        <begin position="161"/>
        <end position="170"/>
    </location>
</feature>
<feature type="short sequence motif" description="Nuclear export signal 1 (NES 1)" evidence="1">
    <location>
        <begin position="229"/>
        <end position="238"/>
    </location>
</feature>
<feature type="short sequence motif" description="Nuclear export signal 2 (NES 2)" evidence="1">
    <location>
        <begin position="360"/>
        <end position="367"/>
    </location>
</feature>
<feature type="compositionally biased region" description="Basic residues" evidence="2">
    <location>
        <begin position="10"/>
        <end position="19"/>
    </location>
</feature>
<feature type="compositionally biased region" description="Basic residues" evidence="2">
    <location>
        <begin position="32"/>
        <end position="41"/>
    </location>
</feature>
<feature type="compositionally biased region" description="Polar residues" evidence="2">
    <location>
        <begin position="140"/>
        <end position="149"/>
    </location>
</feature>
<feature type="compositionally biased region" description="Basic and acidic residues" evidence="2">
    <location>
        <begin position="155"/>
        <end position="169"/>
    </location>
</feature>
<organismHost>
    <name type="scientific">Homo sapiens</name>
    <name type="common">Human</name>
    <dbReference type="NCBI Taxonomy" id="9606"/>
</organismHost>
<dbReference type="EMBL" id="M81432">
    <property type="protein sequence ID" value="AAA45947.1"/>
    <property type="molecule type" value="mRNA"/>
</dbReference>
<dbReference type="PIR" id="A41808">
    <property type="entry name" value="WMBETE"/>
</dbReference>
<dbReference type="GO" id="GO:0030430">
    <property type="term" value="C:host cell cytoplasm"/>
    <property type="evidence" value="ECO:0007669"/>
    <property type="project" value="UniProtKB-SubCell"/>
</dbReference>
<dbReference type="GO" id="GO:0042025">
    <property type="term" value="C:host cell nucleus"/>
    <property type="evidence" value="ECO:0007669"/>
    <property type="project" value="UniProtKB-SubCell"/>
</dbReference>
<dbReference type="InterPro" id="IPR010436">
    <property type="entry name" value="Herpes_UL84"/>
</dbReference>
<dbReference type="Pfam" id="PF06284">
    <property type="entry name" value="Cytomega_UL84"/>
    <property type="match status" value="1"/>
</dbReference>
<comment type="function">
    <text evidence="1">Plays an essential role in viral DNA replication. May participate in the DNA replication initiation by interacting with the origin of lytic replication, oriLyt and subsequently recruiting other viral/cellular factors. Additionally, interacts with and shuttles IRS1 viral mRNA from the host nucleus to the cytoplasm (By similarity).</text>
</comment>
<comment type="subunit">
    <text evidence="1">Interacts with the DNA polymerase accessory subunit UL44. Interacts with HCMV major transcription-activating enzyme IE2. Interacts with host HNRNPK (By similarity).</text>
</comment>
<comment type="subcellular location">
    <subcellularLocation>
        <location evidence="1">Host nucleus</location>
    </subcellularLocation>
    <subcellularLocation>
        <location evidence="1">Host cytoplasm</location>
    </subcellularLocation>
    <text evidence="1">Shuttles between host nucleus and cytoplasm. In the nucleus, colocalizes with UL44 and IE2 in the viral DNA replication compartments (By similarity).</text>
</comment>
<comment type="similarity">
    <text evidence="3">Belongs to the HHV-5 UL84 protein family.</text>
</comment>
<name>UL84_HCMVT</name>
<keyword id="KW-1035">Host cytoplasm</keyword>
<keyword id="KW-1048">Host nucleus</keyword>
<reference key="1">
    <citation type="journal article" date="1992" name="J. Virol.">
        <title>Characterization of human cytomegalovirus UL84 early gene and identification of its putative protein product.</title>
        <authorList>
            <person name="He Y.S."/>
            <person name="Xu L."/>
            <person name="Huang E.S."/>
        </authorList>
    </citation>
    <scope>NUCLEOTIDE SEQUENCE [MRNA]</scope>
</reference>
<evidence type="ECO:0000250" key="1"/>
<evidence type="ECO:0000256" key="2">
    <source>
        <dbReference type="SAM" id="MobiDB-lite"/>
    </source>
</evidence>
<evidence type="ECO:0000305" key="3"/>
<gene>
    <name type="primary">UL84</name>
</gene>